<name>RL14_METTP</name>
<proteinExistence type="inferred from homology"/>
<reference key="1">
    <citation type="submission" date="2006-10" db="EMBL/GenBank/DDBJ databases">
        <title>Complete sequence of Methanosaeta thermophila PT.</title>
        <authorList>
            <consortium name="US DOE Joint Genome Institute"/>
            <person name="Copeland A."/>
            <person name="Lucas S."/>
            <person name="Lapidus A."/>
            <person name="Barry K."/>
            <person name="Detter J.C."/>
            <person name="Glavina del Rio T."/>
            <person name="Hammon N."/>
            <person name="Israni S."/>
            <person name="Pitluck S."/>
            <person name="Chain P."/>
            <person name="Malfatti S."/>
            <person name="Shin M."/>
            <person name="Vergez L."/>
            <person name="Schmutz J."/>
            <person name="Larimer F."/>
            <person name="Land M."/>
            <person name="Hauser L."/>
            <person name="Kyrpides N."/>
            <person name="Kim E."/>
            <person name="Smith K.S."/>
            <person name="Ingram-Smith C."/>
            <person name="Richardson P."/>
        </authorList>
    </citation>
    <scope>NUCLEOTIDE SEQUENCE [LARGE SCALE GENOMIC DNA]</scope>
    <source>
        <strain>DSM 6194 / JCM 14653 / NBRC 101360 / PT</strain>
    </source>
</reference>
<feature type="chain" id="PRO_1000055634" description="Large ribosomal subunit protein uL14">
    <location>
        <begin position="1"/>
        <end position="132"/>
    </location>
</feature>
<organism>
    <name type="scientific">Methanothrix thermoacetophila (strain DSM 6194 / JCM 14653 / NBRC 101360 / PT)</name>
    <name type="common">Methanosaeta thermophila</name>
    <dbReference type="NCBI Taxonomy" id="349307"/>
    <lineage>
        <taxon>Archaea</taxon>
        <taxon>Methanobacteriati</taxon>
        <taxon>Methanobacteriota</taxon>
        <taxon>Stenosarchaea group</taxon>
        <taxon>Methanomicrobia</taxon>
        <taxon>Methanotrichales</taxon>
        <taxon>Methanotrichaceae</taxon>
        <taxon>Methanothrix</taxon>
    </lineage>
</organism>
<protein>
    <recommendedName>
        <fullName evidence="1">Large ribosomal subunit protein uL14</fullName>
    </recommendedName>
    <alternativeName>
        <fullName evidence="2">50S ribosomal protein L14</fullName>
    </alternativeName>
</protein>
<keyword id="KW-1185">Reference proteome</keyword>
<keyword id="KW-0687">Ribonucleoprotein</keyword>
<keyword id="KW-0689">Ribosomal protein</keyword>
<keyword id="KW-0694">RNA-binding</keyword>
<keyword id="KW-0699">rRNA-binding</keyword>
<sequence>MRGNKAKIPRSINTGTYLECADNTGARTLFVVSVKKYRGVKNRQPCAGIGDMVVVSVKKGTPEMRKQIFNAVIIRQKKEFRRPDGLRVKFEDNAAVITDDAGVPKGSEIKGPVAREVAERFGKIASSAAIIV</sequence>
<accession>A0B9W0</accession>
<evidence type="ECO:0000255" key="1">
    <source>
        <dbReference type="HAMAP-Rule" id="MF_01367"/>
    </source>
</evidence>
<evidence type="ECO:0000305" key="2"/>
<dbReference type="EMBL" id="CP000477">
    <property type="protein sequence ID" value="ABK15484.1"/>
    <property type="molecule type" value="Genomic_DNA"/>
</dbReference>
<dbReference type="RefSeq" id="WP_011696862.1">
    <property type="nucleotide sequence ID" value="NC_008553.1"/>
</dbReference>
<dbReference type="SMR" id="A0B9W0"/>
<dbReference type="STRING" id="349307.Mthe_1718"/>
<dbReference type="GeneID" id="4462678"/>
<dbReference type="KEGG" id="mtp:Mthe_1718"/>
<dbReference type="HOGENOM" id="CLU_095071_3_0_2"/>
<dbReference type="OrthoDB" id="23569at2157"/>
<dbReference type="Proteomes" id="UP000000674">
    <property type="component" value="Chromosome"/>
</dbReference>
<dbReference type="GO" id="GO:0022625">
    <property type="term" value="C:cytosolic large ribosomal subunit"/>
    <property type="evidence" value="ECO:0007669"/>
    <property type="project" value="TreeGrafter"/>
</dbReference>
<dbReference type="GO" id="GO:0070180">
    <property type="term" value="F:large ribosomal subunit rRNA binding"/>
    <property type="evidence" value="ECO:0007669"/>
    <property type="project" value="TreeGrafter"/>
</dbReference>
<dbReference type="GO" id="GO:0003735">
    <property type="term" value="F:structural constituent of ribosome"/>
    <property type="evidence" value="ECO:0007669"/>
    <property type="project" value="InterPro"/>
</dbReference>
<dbReference type="GO" id="GO:0006412">
    <property type="term" value="P:translation"/>
    <property type="evidence" value="ECO:0007669"/>
    <property type="project" value="UniProtKB-UniRule"/>
</dbReference>
<dbReference type="CDD" id="cd00337">
    <property type="entry name" value="Ribosomal_uL14"/>
    <property type="match status" value="1"/>
</dbReference>
<dbReference type="FunFam" id="2.40.150.20:FF:000007">
    <property type="entry name" value="50S ribosomal protein L14"/>
    <property type="match status" value="1"/>
</dbReference>
<dbReference type="Gene3D" id="2.40.150.20">
    <property type="entry name" value="Ribosomal protein L14"/>
    <property type="match status" value="1"/>
</dbReference>
<dbReference type="HAMAP" id="MF_01367">
    <property type="entry name" value="Ribosomal_uL14"/>
    <property type="match status" value="1"/>
</dbReference>
<dbReference type="InterPro" id="IPR000218">
    <property type="entry name" value="Ribosomal_uL14"/>
</dbReference>
<dbReference type="InterPro" id="IPR019971">
    <property type="entry name" value="Ribosomal_uL14_arc"/>
</dbReference>
<dbReference type="InterPro" id="IPR019972">
    <property type="entry name" value="Ribosomal_uL14_CS"/>
</dbReference>
<dbReference type="InterPro" id="IPR036853">
    <property type="entry name" value="Ribosomal_uL14_sf"/>
</dbReference>
<dbReference type="NCBIfam" id="NF006344">
    <property type="entry name" value="PRK08571.1"/>
    <property type="match status" value="1"/>
</dbReference>
<dbReference type="NCBIfam" id="TIGR03673">
    <property type="entry name" value="uL14_arch"/>
    <property type="match status" value="1"/>
</dbReference>
<dbReference type="PANTHER" id="PTHR11761">
    <property type="entry name" value="50S/60S RIBOSOMAL PROTEIN L14/L23"/>
    <property type="match status" value="1"/>
</dbReference>
<dbReference type="PANTHER" id="PTHR11761:SF8">
    <property type="entry name" value="LARGE RIBOSOMAL SUBUNIT PROTEIN UL14"/>
    <property type="match status" value="1"/>
</dbReference>
<dbReference type="Pfam" id="PF00238">
    <property type="entry name" value="Ribosomal_L14"/>
    <property type="match status" value="1"/>
</dbReference>
<dbReference type="SMART" id="SM01374">
    <property type="entry name" value="Ribosomal_L14"/>
    <property type="match status" value="1"/>
</dbReference>
<dbReference type="SUPFAM" id="SSF50193">
    <property type="entry name" value="Ribosomal protein L14"/>
    <property type="match status" value="1"/>
</dbReference>
<dbReference type="PROSITE" id="PS00049">
    <property type="entry name" value="RIBOSOMAL_L14"/>
    <property type="match status" value="1"/>
</dbReference>
<gene>
    <name evidence="1" type="primary">rpl14</name>
    <name type="ordered locus">Mthe_1718</name>
</gene>
<comment type="function">
    <text evidence="1">Binds to 23S rRNA. Forms part of two intersubunit bridges in the 70S ribosome.</text>
</comment>
<comment type="subunit">
    <text evidence="1">Part of the 50S ribosomal subunit. Forms a cluster with proteins L3 and L24e, part of which may contact the 16S rRNA in 2 intersubunit bridges.</text>
</comment>
<comment type="similarity">
    <text evidence="1">Belongs to the universal ribosomal protein uL14 family.</text>
</comment>